<organism>
    <name type="scientific">Bacillus cereus (strain ATCC 14579 / DSM 31 / CCUG 7414 / JCM 2152 / NBRC 15305 / NCIMB 9373 / NCTC 2599 / NRRL B-3711)</name>
    <dbReference type="NCBI Taxonomy" id="226900"/>
    <lineage>
        <taxon>Bacteria</taxon>
        <taxon>Bacillati</taxon>
        <taxon>Bacillota</taxon>
        <taxon>Bacilli</taxon>
        <taxon>Bacillales</taxon>
        <taxon>Bacillaceae</taxon>
        <taxon>Bacillus</taxon>
        <taxon>Bacillus cereus group</taxon>
    </lineage>
</organism>
<feature type="chain" id="PRO_1000021260" description="Shikimate dehydrogenase (NADP(+))">
    <location>
        <begin position="1"/>
        <end position="277"/>
    </location>
</feature>
<feature type="active site" description="Proton acceptor" evidence="1">
    <location>
        <position position="66"/>
    </location>
</feature>
<feature type="binding site" evidence="1">
    <location>
        <begin position="15"/>
        <end position="17"/>
    </location>
    <ligand>
        <name>shikimate</name>
        <dbReference type="ChEBI" id="CHEBI:36208"/>
    </ligand>
</feature>
<feature type="binding site" evidence="1">
    <location>
        <position position="62"/>
    </location>
    <ligand>
        <name>shikimate</name>
        <dbReference type="ChEBI" id="CHEBI:36208"/>
    </ligand>
</feature>
<feature type="binding site" evidence="1">
    <location>
        <position position="87"/>
    </location>
    <ligand>
        <name>shikimate</name>
        <dbReference type="ChEBI" id="CHEBI:36208"/>
    </ligand>
</feature>
<feature type="binding site" evidence="1">
    <location>
        <position position="102"/>
    </location>
    <ligand>
        <name>shikimate</name>
        <dbReference type="ChEBI" id="CHEBI:36208"/>
    </ligand>
</feature>
<feature type="binding site" evidence="1">
    <location>
        <begin position="127"/>
        <end position="131"/>
    </location>
    <ligand>
        <name>NADP(+)</name>
        <dbReference type="ChEBI" id="CHEBI:58349"/>
    </ligand>
</feature>
<feature type="binding site" evidence="1">
    <location>
        <begin position="151"/>
        <end position="156"/>
    </location>
    <ligand>
        <name>NADP(+)</name>
        <dbReference type="ChEBI" id="CHEBI:58349"/>
    </ligand>
</feature>
<feature type="binding site" evidence="1">
    <location>
        <position position="219"/>
    </location>
    <ligand>
        <name>NADP(+)</name>
        <dbReference type="ChEBI" id="CHEBI:58349"/>
    </ligand>
</feature>
<feature type="binding site" evidence="1">
    <location>
        <position position="221"/>
    </location>
    <ligand>
        <name>shikimate</name>
        <dbReference type="ChEBI" id="CHEBI:36208"/>
    </ligand>
</feature>
<feature type="binding site" evidence="1">
    <location>
        <position position="242"/>
    </location>
    <ligand>
        <name>NADP(+)</name>
        <dbReference type="ChEBI" id="CHEBI:58349"/>
    </ligand>
</feature>
<comment type="function">
    <text evidence="1">Involved in the biosynthesis of the chorismate, which leads to the biosynthesis of aromatic amino acids. Catalyzes the reversible NADPH linked reduction of 3-dehydroshikimate (DHSA) to yield shikimate (SA).</text>
</comment>
<comment type="catalytic activity">
    <reaction evidence="1">
        <text>shikimate + NADP(+) = 3-dehydroshikimate + NADPH + H(+)</text>
        <dbReference type="Rhea" id="RHEA:17737"/>
        <dbReference type="ChEBI" id="CHEBI:15378"/>
        <dbReference type="ChEBI" id="CHEBI:16630"/>
        <dbReference type="ChEBI" id="CHEBI:36208"/>
        <dbReference type="ChEBI" id="CHEBI:57783"/>
        <dbReference type="ChEBI" id="CHEBI:58349"/>
        <dbReference type="EC" id="1.1.1.25"/>
    </reaction>
</comment>
<comment type="pathway">
    <text evidence="1">Metabolic intermediate biosynthesis; chorismate biosynthesis; chorismate from D-erythrose 4-phosphate and phosphoenolpyruvate: step 4/7.</text>
</comment>
<comment type="subunit">
    <text evidence="1">Homodimer.</text>
</comment>
<comment type="similarity">
    <text evidence="1">Belongs to the shikimate dehydrogenase family.</text>
</comment>
<gene>
    <name evidence="1" type="primary">aroE</name>
    <name type="ordered locus">BC_4331</name>
</gene>
<dbReference type="EC" id="1.1.1.25" evidence="1"/>
<dbReference type="EMBL" id="AE016877">
    <property type="protein sequence ID" value="AAP11244.1"/>
    <property type="molecule type" value="Genomic_DNA"/>
</dbReference>
<dbReference type="RefSeq" id="NP_834043.1">
    <property type="nucleotide sequence ID" value="NC_004722.1"/>
</dbReference>
<dbReference type="RefSeq" id="WP_000812076.1">
    <property type="nucleotide sequence ID" value="NZ_CP138336.1"/>
</dbReference>
<dbReference type="SMR" id="Q818D0"/>
<dbReference type="STRING" id="226900.BC_4331"/>
<dbReference type="KEGG" id="bce:BC4331"/>
<dbReference type="PATRIC" id="fig|226900.8.peg.4479"/>
<dbReference type="HOGENOM" id="CLU_044063_4_1_9"/>
<dbReference type="OrthoDB" id="9792692at2"/>
<dbReference type="UniPathway" id="UPA00053">
    <property type="reaction ID" value="UER00087"/>
</dbReference>
<dbReference type="Proteomes" id="UP000001417">
    <property type="component" value="Chromosome"/>
</dbReference>
<dbReference type="GO" id="GO:0005829">
    <property type="term" value="C:cytosol"/>
    <property type="evidence" value="ECO:0000318"/>
    <property type="project" value="GO_Central"/>
</dbReference>
<dbReference type="GO" id="GO:0050661">
    <property type="term" value="F:NADP binding"/>
    <property type="evidence" value="ECO:0000318"/>
    <property type="project" value="GO_Central"/>
</dbReference>
<dbReference type="GO" id="GO:0004764">
    <property type="term" value="F:shikimate 3-dehydrogenase (NADP+) activity"/>
    <property type="evidence" value="ECO:0000318"/>
    <property type="project" value="GO_Central"/>
</dbReference>
<dbReference type="GO" id="GO:0008652">
    <property type="term" value="P:amino acid biosynthetic process"/>
    <property type="evidence" value="ECO:0007669"/>
    <property type="project" value="UniProtKB-KW"/>
</dbReference>
<dbReference type="GO" id="GO:0009073">
    <property type="term" value="P:aromatic amino acid family biosynthetic process"/>
    <property type="evidence" value="ECO:0007669"/>
    <property type="project" value="UniProtKB-KW"/>
</dbReference>
<dbReference type="GO" id="GO:0009423">
    <property type="term" value="P:chorismate biosynthetic process"/>
    <property type="evidence" value="ECO:0000318"/>
    <property type="project" value="GO_Central"/>
</dbReference>
<dbReference type="GO" id="GO:0019632">
    <property type="term" value="P:shikimate metabolic process"/>
    <property type="evidence" value="ECO:0000318"/>
    <property type="project" value="GO_Central"/>
</dbReference>
<dbReference type="CDD" id="cd01065">
    <property type="entry name" value="NAD_bind_Shikimate_DH"/>
    <property type="match status" value="1"/>
</dbReference>
<dbReference type="FunFam" id="3.40.50.10860:FF:000011">
    <property type="entry name" value="Shikimate dehydrogenase (NADP(+))"/>
    <property type="match status" value="1"/>
</dbReference>
<dbReference type="FunFam" id="3.40.50.720:FF:000257">
    <property type="entry name" value="Shikimate dehydrogenase (NADP(+))"/>
    <property type="match status" value="1"/>
</dbReference>
<dbReference type="Gene3D" id="3.40.50.10860">
    <property type="entry name" value="Leucine Dehydrogenase, chain A, domain 1"/>
    <property type="match status" value="1"/>
</dbReference>
<dbReference type="Gene3D" id="3.40.50.720">
    <property type="entry name" value="NAD(P)-binding Rossmann-like Domain"/>
    <property type="match status" value="1"/>
</dbReference>
<dbReference type="HAMAP" id="MF_00222">
    <property type="entry name" value="Shikimate_DH_AroE"/>
    <property type="match status" value="1"/>
</dbReference>
<dbReference type="InterPro" id="IPR046346">
    <property type="entry name" value="Aminoacid_DH-like_N_sf"/>
</dbReference>
<dbReference type="InterPro" id="IPR036291">
    <property type="entry name" value="NAD(P)-bd_dom_sf"/>
</dbReference>
<dbReference type="InterPro" id="IPR041121">
    <property type="entry name" value="SDH_C"/>
</dbReference>
<dbReference type="InterPro" id="IPR011342">
    <property type="entry name" value="Shikimate_DH"/>
</dbReference>
<dbReference type="InterPro" id="IPR013708">
    <property type="entry name" value="Shikimate_DH-bd_N"/>
</dbReference>
<dbReference type="InterPro" id="IPR022893">
    <property type="entry name" value="Shikimate_DH_fam"/>
</dbReference>
<dbReference type="InterPro" id="IPR006151">
    <property type="entry name" value="Shikm_DH/Glu-tRNA_Rdtase"/>
</dbReference>
<dbReference type="NCBIfam" id="TIGR00507">
    <property type="entry name" value="aroE"/>
    <property type="match status" value="1"/>
</dbReference>
<dbReference type="NCBIfam" id="NF001319">
    <property type="entry name" value="PRK00258.3-3"/>
    <property type="match status" value="1"/>
</dbReference>
<dbReference type="PANTHER" id="PTHR21089:SF1">
    <property type="entry name" value="BIFUNCTIONAL 3-DEHYDROQUINATE DEHYDRATASE_SHIKIMATE DEHYDROGENASE, CHLOROPLASTIC"/>
    <property type="match status" value="1"/>
</dbReference>
<dbReference type="PANTHER" id="PTHR21089">
    <property type="entry name" value="SHIKIMATE DEHYDROGENASE"/>
    <property type="match status" value="1"/>
</dbReference>
<dbReference type="Pfam" id="PF18317">
    <property type="entry name" value="SDH_C"/>
    <property type="match status" value="1"/>
</dbReference>
<dbReference type="Pfam" id="PF01488">
    <property type="entry name" value="Shikimate_DH"/>
    <property type="match status" value="1"/>
</dbReference>
<dbReference type="Pfam" id="PF08501">
    <property type="entry name" value="Shikimate_dh_N"/>
    <property type="match status" value="1"/>
</dbReference>
<dbReference type="SUPFAM" id="SSF53223">
    <property type="entry name" value="Aminoacid dehydrogenase-like, N-terminal domain"/>
    <property type="match status" value="1"/>
</dbReference>
<dbReference type="SUPFAM" id="SSF51735">
    <property type="entry name" value="NAD(P)-binding Rossmann-fold domains"/>
    <property type="match status" value="1"/>
</dbReference>
<sequence length="277" mass="30304">MKQLYGVIGNPIGHSLSPVMHNDAFEHLNMDAHYHAFLVEEELLGEAVRGLKALGISGFNVTTPHKVAIMEYLDEIDPLARKIGAVNTVVHKDGRLIGYNTDGIGFVRALQSISNEPLQGKRILLLGSGGASRAIYFSLADVGVKEIDVANRTVDKAKELIAARTADVNSVALSLEKATEEQGNYDIIIQTTTIGMHPHVEHTPLQICSLKKGTIVSDIIYNPFETKILCEAKEQGAIIQNGIDMFVYQGALAFEMWTGRTPNIERMKQLVIEKLGG</sequence>
<accession>Q818D0</accession>
<name>AROE_BACCR</name>
<protein>
    <recommendedName>
        <fullName evidence="1">Shikimate dehydrogenase (NADP(+))</fullName>
        <shortName evidence="1">SDH</shortName>
        <ecNumber evidence="1">1.1.1.25</ecNumber>
    </recommendedName>
</protein>
<keyword id="KW-0028">Amino-acid biosynthesis</keyword>
<keyword id="KW-0057">Aromatic amino acid biosynthesis</keyword>
<keyword id="KW-0521">NADP</keyword>
<keyword id="KW-0560">Oxidoreductase</keyword>
<keyword id="KW-1185">Reference proteome</keyword>
<reference key="1">
    <citation type="journal article" date="2003" name="Nature">
        <title>Genome sequence of Bacillus cereus and comparative analysis with Bacillus anthracis.</title>
        <authorList>
            <person name="Ivanova N."/>
            <person name="Sorokin A."/>
            <person name="Anderson I."/>
            <person name="Galleron N."/>
            <person name="Candelon B."/>
            <person name="Kapatral V."/>
            <person name="Bhattacharyya A."/>
            <person name="Reznik G."/>
            <person name="Mikhailova N."/>
            <person name="Lapidus A."/>
            <person name="Chu L."/>
            <person name="Mazur M."/>
            <person name="Goltsman E."/>
            <person name="Larsen N."/>
            <person name="D'Souza M."/>
            <person name="Walunas T."/>
            <person name="Grechkin Y."/>
            <person name="Pusch G."/>
            <person name="Haselkorn R."/>
            <person name="Fonstein M."/>
            <person name="Ehrlich S.D."/>
            <person name="Overbeek R."/>
            <person name="Kyrpides N.C."/>
        </authorList>
    </citation>
    <scope>NUCLEOTIDE SEQUENCE [LARGE SCALE GENOMIC DNA]</scope>
    <source>
        <strain>ATCC 14579 / DSM 31 / CCUG 7414 / JCM 2152 / NBRC 15305 / NCIMB 9373 / NCTC 2599 / NRRL B-3711</strain>
    </source>
</reference>
<evidence type="ECO:0000255" key="1">
    <source>
        <dbReference type="HAMAP-Rule" id="MF_00222"/>
    </source>
</evidence>
<proteinExistence type="inferred from homology"/>